<organism>
    <name type="scientific">Francisella tularensis subsp. holarctica (strain FTNF002-00 / FTA)</name>
    <dbReference type="NCBI Taxonomy" id="458234"/>
    <lineage>
        <taxon>Bacteria</taxon>
        <taxon>Pseudomonadati</taxon>
        <taxon>Pseudomonadota</taxon>
        <taxon>Gammaproteobacteria</taxon>
        <taxon>Thiotrichales</taxon>
        <taxon>Francisellaceae</taxon>
        <taxon>Francisella</taxon>
    </lineage>
</organism>
<dbReference type="EC" id="6.3.5.2" evidence="1"/>
<dbReference type="EMBL" id="CP000803">
    <property type="protein sequence ID" value="ABU61606.1"/>
    <property type="molecule type" value="Genomic_DNA"/>
</dbReference>
<dbReference type="RefSeq" id="WP_010031593.1">
    <property type="nucleotide sequence ID" value="NC_009749.1"/>
</dbReference>
<dbReference type="SMR" id="A7NCA3"/>
<dbReference type="MEROPS" id="C26.957"/>
<dbReference type="KEGG" id="fta:FTA_1130"/>
<dbReference type="HOGENOM" id="CLU_014340_0_5_6"/>
<dbReference type="UniPathway" id="UPA00189">
    <property type="reaction ID" value="UER00296"/>
</dbReference>
<dbReference type="GO" id="GO:0005829">
    <property type="term" value="C:cytosol"/>
    <property type="evidence" value="ECO:0007669"/>
    <property type="project" value="TreeGrafter"/>
</dbReference>
<dbReference type="GO" id="GO:0005524">
    <property type="term" value="F:ATP binding"/>
    <property type="evidence" value="ECO:0007669"/>
    <property type="project" value="UniProtKB-UniRule"/>
</dbReference>
<dbReference type="GO" id="GO:0003921">
    <property type="term" value="F:GMP synthase activity"/>
    <property type="evidence" value="ECO:0007669"/>
    <property type="project" value="InterPro"/>
</dbReference>
<dbReference type="CDD" id="cd01742">
    <property type="entry name" value="GATase1_GMP_Synthase"/>
    <property type="match status" value="1"/>
</dbReference>
<dbReference type="CDD" id="cd01997">
    <property type="entry name" value="GMP_synthase_C"/>
    <property type="match status" value="1"/>
</dbReference>
<dbReference type="FunFam" id="3.30.300.10:FF:000002">
    <property type="entry name" value="GMP synthase [glutamine-hydrolyzing]"/>
    <property type="match status" value="1"/>
</dbReference>
<dbReference type="FunFam" id="3.40.50.620:FF:000001">
    <property type="entry name" value="GMP synthase [glutamine-hydrolyzing]"/>
    <property type="match status" value="1"/>
</dbReference>
<dbReference type="FunFam" id="3.40.50.880:FF:000001">
    <property type="entry name" value="GMP synthase [glutamine-hydrolyzing]"/>
    <property type="match status" value="1"/>
</dbReference>
<dbReference type="Gene3D" id="3.30.300.10">
    <property type="match status" value="1"/>
</dbReference>
<dbReference type="Gene3D" id="3.40.50.880">
    <property type="match status" value="1"/>
</dbReference>
<dbReference type="Gene3D" id="3.40.50.620">
    <property type="entry name" value="HUPs"/>
    <property type="match status" value="1"/>
</dbReference>
<dbReference type="HAMAP" id="MF_00344">
    <property type="entry name" value="GMP_synthase"/>
    <property type="match status" value="1"/>
</dbReference>
<dbReference type="InterPro" id="IPR029062">
    <property type="entry name" value="Class_I_gatase-like"/>
</dbReference>
<dbReference type="InterPro" id="IPR017926">
    <property type="entry name" value="GATASE"/>
</dbReference>
<dbReference type="InterPro" id="IPR001674">
    <property type="entry name" value="GMP_synth_C"/>
</dbReference>
<dbReference type="InterPro" id="IPR004739">
    <property type="entry name" value="GMP_synth_GATase"/>
</dbReference>
<dbReference type="InterPro" id="IPR022955">
    <property type="entry name" value="GMP_synthase"/>
</dbReference>
<dbReference type="InterPro" id="IPR025777">
    <property type="entry name" value="GMPS_ATP_PPase_dom"/>
</dbReference>
<dbReference type="InterPro" id="IPR022310">
    <property type="entry name" value="NAD/GMP_synthase"/>
</dbReference>
<dbReference type="InterPro" id="IPR014729">
    <property type="entry name" value="Rossmann-like_a/b/a_fold"/>
</dbReference>
<dbReference type="NCBIfam" id="TIGR00884">
    <property type="entry name" value="guaA_Cterm"/>
    <property type="match status" value="1"/>
</dbReference>
<dbReference type="NCBIfam" id="TIGR00888">
    <property type="entry name" value="guaA_Nterm"/>
    <property type="match status" value="1"/>
</dbReference>
<dbReference type="NCBIfam" id="NF000848">
    <property type="entry name" value="PRK00074.1"/>
    <property type="match status" value="1"/>
</dbReference>
<dbReference type="PANTHER" id="PTHR11922:SF2">
    <property type="entry name" value="GMP SYNTHASE [GLUTAMINE-HYDROLYZING]"/>
    <property type="match status" value="1"/>
</dbReference>
<dbReference type="PANTHER" id="PTHR11922">
    <property type="entry name" value="GMP SYNTHASE-RELATED"/>
    <property type="match status" value="1"/>
</dbReference>
<dbReference type="Pfam" id="PF00117">
    <property type="entry name" value="GATase"/>
    <property type="match status" value="1"/>
</dbReference>
<dbReference type="Pfam" id="PF00958">
    <property type="entry name" value="GMP_synt_C"/>
    <property type="match status" value="1"/>
</dbReference>
<dbReference type="Pfam" id="PF02540">
    <property type="entry name" value="NAD_synthase"/>
    <property type="match status" value="1"/>
</dbReference>
<dbReference type="PRINTS" id="PR00097">
    <property type="entry name" value="ANTSNTHASEII"/>
</dbReference>
<dbReference type="PRINTS" id="PR00096">
    <property type="entry name" value="GATASE"/>
</dbReference>
<dbReference type="SUPFAM" id="SSF52402">
    <property type="entry name" value="Adenine nucleotide alpha hydrolases-like"/>
    <property type="match status" value="1"/>
</dbReference>
<dbReference type="SUPFAM" id="SSF52317">
    <property type="entry name" value="Class I glutamine amidotransferase-like"/>
    <property type="match status" value="1"/>
</dbReference>
<dbReference type="SUPFAM" id="SSF54810">
    <property type="entry name" value="GMP synthetase C-terminal dimerisation domain"/>
    <property type="match status" value="1"/>
</dbReference>
<dbReference type="PROSITE" id="PS51273">
    <property type="entry name" value="GATASE_TYPE_1"/>
    <property type="match status" value="1"/>
</dbReference>
<dbReference type="PROSITE" id="PS51553">
    <property type="entry name" value="GMPS_ATP_PPASE"/>
    <property type="match status" value="1"/>
</dbReference>
<evidence type="ECO:0000255" key="1">
    <source>
        <dbReference type="HAMAP-Rule" id="MF_00344"/>
    </source>
</evidence>
<reference key="1">
    <citation type="journal article" date="2009" name="PLoS ONE">
        <title>Complete genome sequence of Francisella tularensis subspecies holarctica FTNF002-00.</title>
        <authorList>
            <person name="Barabote R.D."/>
            <person name="Xie G."/>
            <person name="Brettin T.S."/>
            <person name="Hinrichs S.H."/>
            <person name="Fey P.D."/>
            <person name="Jay J.J."/>
            <person name="Engle J.L."/>
            <person name="Godbole S.D."/>
            <person name="Noronha J.M."/>
            <person name="Scheuermann R.H."/>
            <person name="Zhou L.W."/>
            <person name="Lion C."/>
            <person name="Dempsey M.P."/>
        </authorList>
    </citation>
    <scope>NUCLEOTIDE SEQUENCE [LARGE SCALE GENOMIC DNA]</scope>
    <source>
        <strain>FTNF002-00 / FTA</strain>
    </source>
</reference>
<proteinExistence type="inferred from homology"/>
<feature type="chain" id="PRO_1000120302" description="GMP synthase [glutamine-hydrolyzing]">
    <location>
        <begin position="1"/>
        <end position="516"/>
    </location>
</feature>
<feature type="domain" description="Glutamine amidotransferase type-1" evidence="1">
    <location>
        <begin position="8"/>
        <end position="198"/>
    </location>
</feature>
<feature type="domain" description="GMPS ATP-PPase" evidence="1">
    <location>
        <begin position="199"/>
        <end position="391"/>
    </location>
</feature>
<feature type="active site" description="Nucleophile" evidence="1">
    <location>
        <position position="84"/>
    </location>
</feature>
<feature type="active site" evidence="1">
    <location>
        <position position="172"/>
    </location>
</feature>
<feature type="active site" evidence="1">
    <location>
        <position position="174"/>
    </location>
</feature>
<feature type="binding site" evidence="1">
    <location>
        <begin position="226"/>
        <end position="232"/>
    </location>
    <ligand>
        <name>ATP</name>
        <dbReference type="ChEBI" id="CHEBI:30616"/>
    </ligand>
</feature>
<name>GUAA_FRATF</name>
<protein>
    <recommendedName>
        <fullName evidence="1">GMP synthase [glutamine-hydrolyzing]</fullName>
        <ecNumber evidence="1">6.3.5.2</ecNumber>
    </recommendedName>
    <alternativeName>
        <fullName evidence="1">GMP synthetase</fullName>
    </alternativeName>
    <alternativeName>
        <fullName evidence="1">Glutamine amidotransferase</fullName>
    </alternativeName>
</protein>
<keyword id="KW-0067">ATP-binding</keyword>
<keyword id="KW-0315">Glutamine amidotransferase</keyword>
<keyword id="KW-0332">GMP biosynthesis</keyword>
<keyword id="KW-0436">Ligase</keyword>
<keyword id="KW-0547">Nucleotide-binding</keyword>
<keyword id="KW-0658">Purine biosynthesis</keyword>
<comment type="function">
    <text evidence="1">Catalyzes the synthesis of GMP from XMP.</text>
</comment>
<comment type="catalytic activity">
    <reaction evidence="1">
        <text>XMP + L-glutamine + ATP + H2O = GMP + L-glutamate + AMP + diphosphate + 2 H(+)</text>
        <dbReference type="Rhea" id="RHEA:11680"/>
        <dbReference type="ChEBI" id="CHEBI:15377"/>
        <dbReference type="ChEBI" id="CHEBI:15378"/>
        <dbReference type="ChEBI" id="CHEBI:29985"/>
        <dbReference type="ChEBI" id="CHEBI:30616"/>
        <dbReference type="ChEBI" id="CHEBI:33019"/>
        <dbReference type="ChEBI" id="CHEBI:57464"/>
        <dbReference type="ChEBI" id="CHEBI:58115"/>
        <dbReference type="ChEBI" id="CHEBI:58359"/>
        <dbReference type="ChEBI" id="CHEBI:456215"/>
        <dbReference type="EC" id="6.3.5.2"/>
    </reaction>
</comment>
<comment type="pathway">
    <text evidence="1">Purine metabolism; GMP biosynthesis; GMP from XMP (L-Gln route): step 1/1.</text>
</comment>
<comment type="subunit">
    <text evidence="1">Homodimer.</text>
</comment>
<sequence>MTDIHNHKILILDFGSQYTQLIARRVREVGVFCEIFPHDVAADFIKNYQAKGIILSGGPESVYDSDVKAPEIVFELGVPVLGICYGMQTMVMQHGGEVKGADQSEFGKAIINILNLTNNIFSNMEHEQLVWMSHSDKVTQTGEHFEIIASSTNAPVAAVAHKNKPFFGVQFHPETTHTENGKQIIENFVVNICGCDTLWNIENIIENDIKEIKQKVGTDKVILGLSGGVDSSVVAAILHQAIGDQLTCIFVDTGLLRLNEGDQVMQVFAEHMDINVIRINAKNRFLDALRGICDPEQKRKIIGKLFVDIFDEEAAKIENAKWLAQGTIYSDVIESAGNNQSKAHVIKSHHNVGGLPKEMKLKLLEPLRELFKDEVRKLGLGLGLPYNMLYRHPFPGPGLGVRILGEIKKEYVETLQKADAIFTEELYKHNLYHDVSQAFGVFLPIKSVGVVGDQRRYEYVIALRAVVSIDFMTATWANLPYDFLSLVSNRIVNEVKQVSRVVYDVTGKPPGTIEWE</sequence>
<accession>A7NCA3</accession>
<gene>
    <name evidence="1" type="primary">guaA</name>
    <name type="ordered locus">FTA_1130</name>
</gene>